<dbReference type="EMBL" id="CP000034">
    <property type="protein sequence ID" value="ABB62561.1"/>
    <property type="molecule type" value="Genomic_DNA"/>
</dbReference>
<dbReference type="RefSeq" id="WP_000106627.1">
    <property type="nucleotide sequence ID" value="NC_007606.1"/>
</dbReference>
<dbReference type="RefSeq" id="YP_404052.1">
    <property type="nucleotide sequence ID" value="NC_007606.1"/>
</dbReference>
<dbReference type="STRING" id="300267.SDY_2491"/>
<dbReference type="EnsemblBacteria" id="ABB62561">
    <property type="protein sequence ID" value="ABB62561"/>
    <property type="gene ID" value="SDY_2491"/>
</dbReference>
<dbReference type="GeneID" id="93774879"/>
<dbReference type="KEGG" id="sdy:SDY_2491"/>
<dbReference type="PATRIC" id="fig|300267.13.peg.3002"/>
<dbReference type="HOGENOM" id="CLU_128746_0_0_6"/>
<dbReference type="Proteomes" id="UP000002716">
    <property type="component" value="Chromosome"/>
</dbReference>
<dbReference type="GO" id="GO:0005886">
    <property type="term" value="C:plasma membrane"/>
    <property type="evidence" value="ECO:0007669"/>
    <property type="project" value="UniProtKB-SubCell"/>
</dbReference>
<dbReference type="HAMAP" id="MF_01101">
    <property type="entry name" value="UPF0208"/>
    <property type="match status" value="1"/>
</dbReference>
<dbReference type="InterPro" id="IPR007334">
    <property type="entry name" value="UPF0208"/>
</dbReference>
<dbReference type="NCBIfam" id="NF002493">
    <property type="entry name" value="PRK01816.1"/>
    <property type="match status" value="1"/>
</dbReference>
<dbReference type="Pfam" id="PF04217">
    <property type="entry name" value="DUF412"/>
    <property type="match status" value="1"/>
</dbReference>
<evidence type="ECO:0000255" key="1">
    <source>
        <dbReference type="HAMAP-Rule" id="MF_01101"/>
    </source>
</evidence>
<proteinExistence type="inferred from homology"/>
<organism>
    <name type="scientific">Shigella dysenteriae serotype 1 (strain Sd197)</name>
    <dbReference type="NCBI Taxonomy" id="300267"/>
    <lineage>
        <taxon>Bacteria</taxon>
        <taxon>Pseudomonadati</taxon>
        <taxon>Pseudomonadota</taxon>
        <taxon>Gammaproteobacteria</taxon>
        <taxon>Enterobacterales</taxon>
        <taxon>Enterobacteriaceae</taxon>
        <taxon>Shigella</taxon>
    </lineage>
</organism>
<reference key="1">
    <citation type="journal article" date="2005" name="Nucleic Acids Res.">
        <title>Genome dynamics and diversity of Shigella species, the etiologic agents of bacillary dysentery.</title>
        <authorList>
            <person name="Yang F."/>
            <person name="Yang J."/>
            <person name="Zhang X."/>
            <person name="Chen L."/>
            <person name="Jiang Y."/>
            <person name="Yan Y."/>
            <person name="Tang X."/>
            <person name="Wang J."/>
            <person name="Xiong Z."/>
            <person name="Dong J."/>
            <person name="Xue Y."/>
            <person name="Zhu Y."/>
            <person name="Xu X."/>
            <person name="Sun L."/>
            <person name="Chen S."/>
            <person name="Nie H."/>
            <person name="Peng J."/>
            <person name="Xu J."/>
            <person name="Wang Y."/>
            <person name="Yuan Z."/>
            <person name="Wen Y."/>
            <person name="Yao Z."/>
            <person name="Shen Y."/>
            <person name="Qiang B."/>
            <person name="Hou Y."/>
            <person name="Yu J."/>
            <person name="Jin Q."/>
        </authorList>
    </citation>
    <scope>NUCLEOTIDE SEQUENCE [LARGE SCALE GENOMIC DNA]</scope>
    <source>
        <strain>Sd197</strain>
    </source>
</reference>
<comment type="subcellular location">
    <subcellularLocation>
        <location evidence="1">Cell inner membrane</location>
        <topology evidence="1">Multi-pass membrane protein</topology>
    </subcellularLocation>
</comment>
<comment type="similarity">
    <text evidence="1">Belongs to the UPF0208 family.</text>
</comment>
<gene>
    <name evidence="1" type="primary">yfbV</name>
    <name type="ordered locus">SDY_2491</name>
</gene>
<sequence length="151" mass="17213">MSTPDNRSVNFFSLFRRGQHYSKTWPLEKRLAPVFVENRVIKMTRYAIRFMPPIAVFTLCWQIALGGQLGPAVATALFALSLPMQGLWWLGKRSVTPLPPAILNWFYEVRGKLQESGQVLAPVEGKPDYQALADTLKRAFKQLDKTFLDDL</sequence>
<keyword id="KW-0997">Cell inner membrane</keyword>
<keyword id="KW-1003">Cell membrane</keyword>
<keyword id="KW-0472">Membrane</keyword>
<keyword id="KW-1185">Reference proteome</keyword>
<keyword id="KW-0812">Transmembrane</keyword>
<keyword id="KW-1133">Transmembrane helix</keyword>
<protein>
    <recommendedName>
        <fullName evidence="1">UPF0208 membrane protein YfbV</fullName>
    </recommendedName>
</protein>
<accession>Q32DP4</accession>
<name>YFBV_SHIDS</name>
<feature type="chain" id="PRO_1000064980" description="UPF0208 membrane protein YfbV">
    <location>
        <begin position="1"/>
        <end position="151"/>
    </location>
</feature>
<feature type="transmembrane region" description="Helical" evidence="1">
    <location>
        <begin position="46"/>
        <end position="65"/>
    </location>
</feature>
<feature type="transmembrane region" description="Helical" evidence="1">
    <location>
        <begin position="69"/>
        <end position="91"/>
    </location>
</feature>